<keyword id="KW-0002">3D-structure</keyword>
<keyword id="KW-1185">Reference proteome</keyword>
<keyword id="KW-0687">Ribonucleoprotein</keyword>
<keyword id="KW-0689">Ribosomal protein</keyword>
<evidence type="ECO:0000255" key="1">
    <source>
        <dbReference type="HAMAP-Rule" id="MF_00374"/>
    </source>
</evidence>
<evidence type="ECO:0000305" key="2"/>
<evidence type="ECO:0007829" key="3">
    <source>
        <dbReference type="PDB" id="6WU9"/>
    </source>
</evidence>
<name>RL29_ENTFA</name>
<organism>
    <name type="scientific">Enterococcus faecalis (strain ATCC 700802 / V583)</name>
    <dbReference type="NCBI Taxonomy" id="226185"/>
    <lineage>
        <taxon>Bacteria</taxon>
        <taxon>Bacillati</taxon>
        <taxon>Bacillota</taxon>
        <taxon>Bacilli</taxon>
        <taxon>Lactobacillales</taxon>
        <taxon>Enterococcaceae</taxon>
        <taxon>Enterococcus</taxon>
    </lineage>
</organism>
<accession>Q839F6</accession>
<proteinExistence type="evidence at protein level"/>
<dbReference type="EMBL" id="AE016830">
    <property type="protein sequence ID" value="AAO80083.1"/>
    <property type="molecule type" value="Genomic_DNA"/>
</dbReference>
<dbReference type="RefSeq" id="NP_814012.1">
    <property type="nucleotide sequence ID" value="NC_004668.1"/>
</dbReference>
<dbReference type="RefSeq" id="WP_002383858.1">
    <property type="nucleotide sequence ID" value="NZ_KE136524.1"/>
</dbReference>
<dbReference type="PDB" id="6WU9">
    <property type="method" value="EM"/>
    <property type="resolution" value="2.90 A"/>
    <property type="chains" value="Z=2-62"/>
</dbReference>
<dbReference type="PDB" id="7P7Q">
    <property type="method" value="EM"/>
    <property type="resolution" value="2.40 A"/>
    <property type="chains" value="1=1-62"/>
</dbReference>
<dbReference type="PDB" id="7P7R">
    <property type="method" value="EM"/>
    <property type="resolution" value="2.90 A"/>
    <property type="chains" value="1=1-62"/>
</dbReference>
<dbReference type="PDBsum" id="6WU9"/>
<dbReference type="PDBsum" id="7P7Q"/>
<dbReference type="PDBsum" id="7P7R"/>
<dbReference type="EMDB" id="EMD-13241"/>
<dbReference type="EMDB" id="EMD-13242"/>
<dbReference type="SMR" id="Q839F6"/>
<dbReference type="STRING" id="226185.EF_0214"/>
<dbReference type="EnsemblBacteria" id="AAO80083">
    <property type="protein sequence ID" value="AAO80083"/>
    <property type="gene ID" value="EF_0214"/>
</dbReference>
<dbReference type="GeneID" id="60892709"/>
<dbReference type="KEGG" id="efa:EF0214"/>
<dbReference type="PATRIC" id="fig|226185.45.peg.52"/>
<dbReference type="eggNOG" id="COG0255">
    <property type="taxonomic scope" value="Bacteria"/>
</dbReference>
<dbReference type="HOGENOM" id="CLU_158491_5_2_9"/>
<dbReference type="Proteomes" id="UP000001415">
    <property type="component" value="Chromosome"/>
</dbReference>
<dbReference type="GO" id="GO:0022625">
    <property type="term" value="C:cytosolic large ribosomal subunit"/>
    <property type="evidence" value="ECO:0007669"/>
    <property type="project" value="TreeGrafter"/>
</dbReference>
<dbReference type="GO" id="GO:0003735">
    <property type="term" value="F:structural constituent of ribosome"/>
    <property type="evidence" value="ECO:0007669"/>
    <property type="project" value="InterPro"/>
</dbReference>
<dbReference type="GO" id="GO:0006412">
    <property type="term" value="P:translation"/>
    <property type="evidence" value="ECO:0007669"/>
    <property type="project" value="UniProtKB-UniRule"/>
</dbReference>
<dbReference type="CDD" id="cd00427">
    <property type="entry name" value="Ribosomal_L29_HIP"/>
    <property type="match status" value="1"/>
</dbReference>
<dbReference type="FunFam" id="1.10.287.310:FF:000001">
    <property type="entry name" value="50S ribosomal protein L29"/>
    <property type="match status" value="1"/>
</dbReference>
<dbReference type="Gene3D" id="1.10.287.310">
    <property type="match status" value="1"/>
</dbReference>
<dbReference type="HAMAP" id="MF_00374">
    <property type="entry name" value="Ribosomal_uL29"/>
    <property type="match status" value="1"/>
</dbReference>
<dbReference type="InterPro" id="IPR050063">
    <property type="entry name" value="Ribosomal_protein_uL29"/>
</dbReference>
<dbReference type="InterPro" id="IPR001854">
    <property type="entry name" value="Ribosomal_uL29"/>
</dbReference>
<dbReference type="InterPro" id="IPR018254">
    <property type="entry name" value="Ribosomal_uL29_CS"/>
</dbReference>
<dbReference type="InterPro" id="IPR036049">
    <property type="entry name" value="Ribosomal_uL29_sf"/>
</dbReference>
<dbReference type="NCBIfam" id="TIGR00012">
    <property type="entry name" value="L29"/>
    <property type="match status" value="1"/>
</dbReference>
<dbReference type="PANTHER" id="PTHR10916">
    <property type="entry name" value="60S RIBOSOMAL PROTEIN L35/50S RIBOSOMAL PROTEIN L29"/>
    <property type="match status" value="1"/>
</dbReference>
<dbReference type="PANTHER" id="PTHR10916:SF0">
    <property type="entry name" value="LARGE RIBOSOMAL SUBUNIT PROTEIN UL29C"/>
    <property type="match status" value="1"/>
</dbReference>
<dbReference type="Pfam" id="PF00831">
    <property type="entry name" value="Ribosomal_L29"/>
    <property type="match status" value="1"/>
</dbReference>
<dbReference type="SUPFAM" id="SSF46561">
    <property type="entry name" value="Ribosomal protein L29 (L29p)"/>
    <property type="match status" value="1"/>
</dbReference>
<dbReference type="PROSITE" id="PS00579">
    <property type="entry name" value="RIBOSOMAL_L29"/>
    <property type="match status" value="1"/>
</dbReference>
<protein>
    <recommendedName>
        <fullName evidence="1">Large ribosomal subunit protein uL29</fullName>
    </recommendedName>
    <alternativeName>
        <fullName evidence="2">50S ribosomal protein L29</fullName>
    </alternativeName>
</protein>
<gene>
    <name evidence="1" type="primary">rpmC</name>
    <name type="ordered locus">EF_0214</name>
</gene>
<comment type="similarity">
    <text evidence="1">Belongs to the universal ribosomal protein uL29 family.</text>
</comment>
<feature type="chain" id="PRO_0000130389" description="Large ribosomal subunit protein uL29">
    <location>
        <begin position="1"/>
        <end position="62"/>
    </location>
</feature>
<feature type="helix" evidence="3">
    <location>
        <begin position="3"/>
        <end position="6"/>
    </location>
</feature>
<feature type="helix" evidence="3">
    <location>
        <begin position="11"/>
        <end position="33"/>
    </location>
</feature>
<feature type="helix" evidence="3">
    <location>
        <begin position="42"/>
        <end position="60"/>
    </location>
</feature>
<sequence>MKVKEIRELTTAEMLDKEKQLKEELFNLRFQLATGQLENTARIKEVRQSIARIKTVLREQAN</sequence>
<reference key="1">
    <citation type="journal article" date="2003" name="Science">
        <title>Role of mobile DNA in the evolution of vancomycin-resistant Enterococcus faecalis.</title>
        <authorList>
            <person name="Paulsen I.T."/>
            <person name="Banerjei L."/>
            <person name="Myers G.S.A."/>
            <person name="Nelson K.E."/>
            <person name="Seshadri R."/>
            <person name="Read T.D."/>
            <person name="Fouts D.E."/>
            <person name="Eisen J.A."/>
            <person name="Gill S.R."/>
            <person name="Heidelberg J.F."/>
            <person name="Tettelin H."/>
            <person name="Dodson R.J."/>
            <person name="Umayam L.A."/>
            <person name="Brinkac L.M."/>
            <person name="Beanan M.J."/>
            <person name="Daugherty S.C."/>
            <person name="DeBoy R.T."/>
            <person name="Durkin S.A."/>
            <person name="Kolonay J.F."/>
            <person name="Madupu R."/>
            <person name="Nelson W.C."/>
            <person name="Vamathevan J.J."/>
            <person name="Tran B."/>
            <person name="Upton J."/>
            <person name="Hansen T."/>
            <person name="Shetty J."/>
            <person name="Khouri H.M."/>
            <person name="Utterback T.R."/>
            <person name="Radune D."/>
            <person name="Ketchum K.A."/>
            <person name="Dougherty B.A."/>
            <person name="Fraser C.M."/>
        </authorList>
    </citation>
    <scope>NUCLEOTIDE SEQUENCE [LARGE SCALE GENOMIC DNA]</scope>
    <source>
        <strain>ATCC 700802 / V583</strain>
    </source>
</reference>